<reference key="1">
    <citation type="journal article" date="2010" name="J. Bacteriol.">
        <title>Whole genome sequences of two Xylella fastidiosa strains (M12 and M23) causing almond leaf scorch disease in California.</title>
        <authorList>
            <person name="Chen J."/>
            <person name="Xie G."/>
            <person name="Han S."/>
            <person name="Chertkov O."/>
            <person name="Sims D."/>
            <person name="Civerolo E.L."/>
        </authorList>
    </citation>
    <scope>NUCLEOTIDE SEQUENCE [LARGE SCALE GENOMIC DNA]</scope>
    <source>
        <strain>M23</strain>
    </source>
</reference>
<comment type="function">
    <text evidence="1">One of the early assembly proteins it binds 23S rRNA. One of the proteins that surrounds the polypeptide exit tunnel on the outside of the ribosome. Forms the main docking site for trigger factor binding to the ribosome.</text>
</comment>
<comment type="subunit">
    <text evidence="1">Part of the 50S ribosomal subunit. Contacts protein L29, and trigger factor when it is bound to the ribosome.</text>
</comment>
<comment type="similarity">
    <text evidence="1">Belongs to the universal ribosomal protein uL23 family.</text>
</comment>
<sequence length="100" mass="11110">MNSSCEKIFGVLRSPRVSEKSSRLQEISNVYVFEVSSDATKIDVKNAVERLFDVKVGVVRVLNVKGKSKSFRNRGGSRSGWRKAYVRLIDGQSIDVASSV</sequence>
<proteinExistence type="inferred from homology"/>
<dbReference type="EMBL" id="CP001011">
    <property type="protein sequence ID" value="ACB91882.1"/>
    <property type="molecule type" value="Genomic_DNA"/>
</dbReference>
<dbReference type="RefSeq" id="WP_004090096.1">
    <property type="nucleotide sequence ID" value="NC_010577.1"/>
</dbReference>
<dbReference type="SMR" id="B2I8H1"/>
<dbReference type="KEGG" id="xfn:XfasM23_0435"/>
<dbReference type="HOGENOM" id="CLU_037562_3_1_6"/>
<dbReference type="Proteomes" id="UP000001698">
    <property type="component" value="Chromosome"/>
</dbReference>
<dbReference type="GO" id="GO:1990904">
    <property type="term" value="C:ribonucleoprotein complex"/>
    <property type="evidence" value="ECO:0007669"/>
    <property type="project" value="UniProtKB-KW"/>
</dbReference>
<dbReference type="GO" id="GO:0005840">
    <property type="term" value="C:ribosome"/>
    <property type="evidence" value="ECO:0007669"/>
    <property type="project" value="UniProtKB-KW"/>
</dbReference>
<dbReference type="GO" id="GO:0019843">
    <property type="term" value="F:rRNA binding"/>
    <property type="evidence" value="ECO:0007669"/>
    <property type="project" value="UniProtKB-UniRule"/>
</dbReference>
<dbReference type="GO" id="GO:0003735">
    <property type="term" value="F:structural constituent of ribosome"/>
    <property type="evidence" value="ECO:0007669"/>
    <property type="project" value="InterPro"/>
</dbReference>
<dbReference type="GO" id="GO:0006412">
    <property type="term" value="P:translation"/>
    <property type="evidence" value="ECO:0007669"/>
    <property type="project" value="UniProtKB-UniRule"/>
</dbReference>
<dbReference type="FunFam" id="3.30.70.330:FF:000001">
    <property type="entry name" value="50S ribosomal protein L23"/>
    <property type="match status" value="1"/>
</dbReference>
<dbReference type="Gene3D" id="3.30.70.330">
    <property type="match status" value="1"/>
</dbReference>
<dbReference type="HAMAP" id="MF_01369_B">
    <property type="entry name" value="Ribosomal_uL23_B"/>
    <property type="match status" value="1"/>
</dbReference>
<dbReference type="InterPro" id="IPR012677">
    <property type="entry name" value="Nucleotide-bd_a/b_plait_sf"/>
</dbReference>
<dbReference type="InterPro" id="IPR013025">
    <property type="entry name" value="Ribosomal_uL23-like"/>
</dbReference>
<dbReference type="InterPro" id="IPR012678">
    <property type="entry name" value="Ribosomal_uL23/eL15/eS24_sf"/>
</dbReference>
<dbReference type="NCBIfam" id="NF004359">
    <property type="entry name" value="PRK05738.1-3"/>
    <property type="match status" value="1"/>
</dbReference>
<dbReference type="NCBIfam" id="NF004363">
    <property type="entry name" value="PRK05738.2-4"/>
    <property type="match status" value="1"/>
</dbReference>
<dbReference type="PANTHER" id="PTHR11620">
    <property type="entry name" value="60S RIBOSOMAL PROTEIN L23A"/>
    <property type="match status" value="1"/>
</dbReference>
<dbReference type="Pfam" id="PF00276">
    <property type="entry name" value="Ribosomal_L23"/>
    <property type="match status" value="1"/>
</dbReference>
<dbReference type="SUPFAM" id="SSF54189">
    <property type="entry name" value="Ribosomal proteins S24e, L23 and L15e"/>
    <property type="match status" value="1"/>
</dbReference>
<organism>
    <name type="scientific">Xylella fastidiosa (strain M23)</name>
    <dbReference type="NCBI Taxonomy" id="405441"/>
    <lineage>
        <taxon>Bacteria</taxon>
        <taxon>Pseudomonadati</taxon>
        <taxon>Pseudomonadota</taxon>
        <taxon>Gammaproteobacteria</taxon>
        <taxon>Lysobacterales</taxon>
        <taxon>Lysobacteraceae</taxon>
        <taxon>Xylella</taxon>
    </lineage>
</organism>
<protein>
    <recommendedName>
        <fullName evidence="1">Large ribosomal subunit protein uL23</fullName>
    </recommendedName>
    <alternativeName>
        <fullName evidence="2">50S ribosomal protein L23</fullName>
    </alternativeName>
</protein>
<accession>B2I8H1</accession>
<gene>
    <name evidence="1" type="primary">rplW</name>
    <name type="ordered locus">XfasM23_0435</name>
</gene>
<evidence type="ECO:0000255" key="1">
    <source>
        <dbReference type="HAMAP-Rule" id="MF_01369"/>
    </source>
</evidence>
<evidence type="ECO:0000305" key="2"/>
<name>RL23_XYLF2</name>
<keyword id="KW-0687">Ribonucleoprotein</keyword>
<keyword id="KW-0689">Ribosomal protein</keyword>
<keyword id="KW-0694">RNA-binding</keyword>
<keyword id="KW-0699">rRNA-binding</keyword>
<feature type="chain" id="PRO_1000144627" description="Large ribosomal subunit protein uL23">
    <location>
        <begin position="1"/>
        <end position="100"/>
    </location>
</feature>